<feature type="chain" id="PRO_0000185284" description="Peptidase T">
    <location>
        <begin position="1"/>
        <end position="410"/>
    </location>
</feature>
<feature type="active site" evidence="1">
    <location>
        <position position="81"/>
    </location>
</feature>
<feature type="active site" description="Proton acceptor" evidence="1">
    <location>
        <position position="176"/>
    </location>
</feature>
<feature type="binding site" evidence="1">
    <location>
        <position position="79"/>
    </location>
    <ligand>
        <name>Zn(2+)</name>
        <dbReference type="ChEBI" id="CHEBI:29105"/>
        <label>1</label>
    </ligand>
</feature>
<feature type="binding site" evidence="1">
    <location>
        <position position="142"/>
    </location>
    <ligand>
        <name>Zn(2+)</name>
        <dbReference type="ChEBI" id="CHEBI:29105"/>
        <label>1</label>
    </ligand>
</feature>
<feature type="binding site" evidence="1">
    <location>
        <position position="142"/>
    </location>
    <ligand>
        <name>Zn(2+)</name>
        <dbReference type="ChEBI" id="CHEBI:29105"/>
        <label>2</label>
    </ligand>
</feature>
<feature type="binding site" evidence="1">
    <location>
        <position position="177"/>
    </location>
    <ligand>
        <name>Zn(2+)</name>
        <dbReference type="ChEBI" id="CHEBI:29105"/>
        <label>2</label>
    </ligand>
</feature>
<feature type="binding site" evidence="1">
    <location>
        <position position="199"/>
    </location>
    <ligand>
        <name>Zn(2+)</name>
        <dbReference type="ChEBI" id="CHEBI:29105"/>
        <label>1</label>
    </ligand>
</feature>
<feature type="binding site" evidence="1">
    <location>
        <position position="381"/>
    </location>
    <ligand>
        <name>Zn(2+)</name>
        <dbReference type="ChEBI" id="CHEBI:29105"/>
        <label>2</label>
    </ligand>
</feature>
<sequence>MKQELIERFTRYVKIDTQSNEDSHTVPTTPGQIEFGKLLVEELKEVGLTEVTMDDNGYVMATLPANTDKDVPVIGFLAHLDTATDFTGKNVKPQIHENFDGNAITLNEELNVVLTPEQFPELPSYKGHTIITTDGTTLLGADDKAGLTEIMVAMNYLIHNPQIKHGKVRVAFTPDEEIGRGPAHFDVEAFGASFAYTMDGGPLGGLEYESFNAAGAKLTFNGTNTHPGTAKNKMRNATKLAMEFNGHLPVEEAPEYTEGYEGFYHLLSLNGDVEQSKAYYIIRDFDRKNFEARKNTIENIVKQMQEKYGQDAVVLEMNDQYYNMLEKIEPVREIVDIAYEAMKSLNIEPNIHPIRGGTDGSQLSYMGLPTPNIFTGGENYHGKFEYVSVDVMEKAVQVIIEIARRFEEQA</sequence>
<gene>
    <name evidence="1" type="primary">pepT</name>
    <name type="ordered locus">BT9727_3488</name>
</gene>
<evidence type="ECO:0000255" key="1">
    <source>
        <dbReference type="HAMAP-Rule" id="MF_00550"/>
    </source>
</evidence>
<comment type="function">
    <text evidence="1">Cleaves the N-terminal amino acid of tripeptides.</text>
</comment>
<comment type="catalytic activity">
    <reaction evidence="1">
        <text>Release of the N-terminal residue from a tripeptide.</text>
        <dbReference type="EC" id="3.4.11.4"/>
    </reaction>
</comment>
<comment type="cofactor">
    <cofactor evidence="1">
        <name>Zn(2+)</name>
        <dbReference type="ChEBI" id="CHEBI:29105"/>
    </cofactor>
    <text evidence="1">Binds 2 Zn(2+) ions per subunit.</text>
</comment>
<comment type="subcellular location">
    <subcellularLocation>
        <location evidence="1">Cytoplasm</location>
    </subcellularLocation>
</comment>
<comment type="similarity">
    <text evidence="1">Belongs to the peptidase M20B family.</text>
</comment>
<proteinExistence type="inferred from homology"/>
<keyword id="KW-0031">Aminopeptidase</keyword>
<keyword id="KW-0963">Cytoplasm</keyword>
<keyword id="KW-0378">Hydrolase</keyword>
<keyword id="KW-0479">Metal-binding</keyword>
<keyword id="KW-0482">Metalloprotease</keyword>
<keyword id="KW-0645">Protease</keyword>
<keyword id="KW-0862">Zinc</keyword>
<protein>
    <recommendedName>
        <fullName evidence="1">Peptidase T</fullName>
        <ecNumber evidence="1">3.4.11.4</ecNumber>
    </recommendedName>
    <alternativeName>
        <fullName evidence="1">Aminotripeptidase</fullName>
        <shortName evidence="1">Tripeptidase</shortName>
    </alternativeName>
    <alternativeName>
        <fullName evidence="1">Tripeptide aminopeptidase</fullName>
    </alternativeName>
</protein>
<reference key="1">
    <citation type="journal article" date="2006" name="J. Bacteriol.">
        <title>Pathogenomic sequence analysis of Bacillus cereus and Bacillus thuringiensis isolates closely related to Bacillus anthracis.</title>
        <authorList>
            <person name="Han C.S."/>
            <person name="Xie G."/>
            <person name="Challacombe J.F."/>
            <person name="Altherr M.R."/>
            <person name="Bhotika S.S."/>
            <person name="Bruce D."/>
            <person name="Campbell C.S."/>
            <person name="Campbell M.L."/>
            <person name="Chen J."/>
            <person name="Chertkov O."/>
            <person name="Cleland C."/>
            <person name="Dimitrijevic M."/>
            <person name="Doggett N.A."/>
            <person name="Fawcett J.J."/>
            <person name="Glavina T."/>
            <person name="Goodwin L.A."/>
            <person name="Hill K.K."/>
            <person name="Hitchcock P."/>
            <person name="Jackson P.J."/>
            <person name="Keim P."/>
            <person name="Kewalramani A.R."/>
            <person name="Longmire J."/>
            <person name="Lucas S."/>
            <person name="Malfatti S."/>
            <person name="McMurry K."/>
            <person name="Meincke L.J."/>
            <person name="Misra M."/>
            <person name="Moseman B.L."/>
            <person name="Mundt M."/>
            <person name="Munk A.C."/>
            <person name="Okinaka R.T."/>
            <person name="Parson-Quintana B."/>
            <person name="Reilly L.P."/>
            <person name="Richardson P."/>
            <person name="Robinson D.L."/>
            <person name="Rubin E."/>
            <person name="Saunders E."/>
            <person name="Tapia R."/>
            <person name="Tesmer J.G."/>
            <person name="Thayer N."/>
            <person name="Thompson L.S."/>
            <person name="Tice H."/>
            <person name="Ticknor L.O."/>
            <person name="Wills P.L."/>
            <person name="Brettin T.S."/>
            <person name="Gilna P."/>
        </authorList>
    </citation>
    <scope>NUCLEOTIDE SEQUENCE [LARGE SCALE GENOMIC DNA]</scope>
    <source>
        <strain>97-27</strain>
    </source>
</reference>
<organism>
    <name type="scientific">Bacillus thuringiensis subsp. konkukian (strain 97-27)</name>
    <dbReference type="NCBI Taxonomy" id="281309"/>
    <lineage>
        <taxon>Bacteria</taxon>
        <taxon>Bacillati</taxon>
        <taxon>Bacillota</taxon>
        <taxon>Bacilli</taxon>
        <taxon>Bacillales</taxon>
        <taxon>Bacillaceae</taxon>
        <taxon>Bacillus</taxon>
        <taxon>Bacillus cereus group</taxon>
    </lineage>
</organism>
<dbReference type="EC" id="3.4.11.4" evidence="1"/>
<dbReference type="EMBL" id="AE017355">
    <property type="protein sequence ID" value="AAT60559.1"/>
    <property type="molecule type" value="Genomic_DNA"/>
</dbReference>
<dbReference type="RefSeq" id="WP_000806995.1">
    <property type="nucleotide sequence ID" value="NC_005957.1"/>
</dbReference>
<dbReference type="RefSeq" id="YP_037808.1">
    <property type="nucleotide sequence ID" value="NC_005957.1"/>
</dbReference>
<dbReference type="SMR" id="Q6HF68"/>
<dbReference type="MEROPS" id="M20.003"/>
<dbReference type="KEGG" id="btk:BT9727_3488"/>
<dbReference type="PATRIC" id="fig|281309.8.peg.3723"/>
<dbReference type="HOGENOM" id="CLU_053676_0_0_9"/>
<dbReference type="Proteomes" id="UP000001301">
    <property type="component" value="Chromosome"/>
</dbReference>
<dbReference type="GO" id="GO:0005829">
    <property type="term" value="C:cytosol"/>
    <property type="evidence" value="ECO:0007669"/>
    <property type="project" value="TreeGrafter"/>
</dbReference>
<dbReference type="GO" id="GO:0008237">
    <property type="term" value="F:metallopeptidase activity"/>
    <property type="evidence" value="ECO:0007669"/>
    <property type="project" value="UniProtKB-KW"/>
</dbReference>
<dbReference type="GO" id="GO:0045148">
    <property type="term" value="F:tripeptide aminopeptidase activity"/>
    <property type="evidence" value="ECO:0007669"/>
    <property type="project" value="UniProtKB-UniRule"/>
</dbReference>
<dbReference type="GO" id="GO:0008270">
    <property type="term" value="F:zinc ion binding"/>
    <property type="evidence" value="ECO:0007669"/>
    <property type="project" value="UniProtKB-UniRule"/>
</dbReference>
<dbReference type="GO" id="GO:0043171">
    <property type="term" value="P:peptide catabolic process"/>
    <property type="evidence" value="ECO:0007669"/>
    <property type="project" value="UniProtKB-UniRule"/>
</dbReference>
<dbReference type="GO" id="GO:0006508">
    <property type="term" value="P:proteolysis"/>
    <property type="evidence" value="ECO:0007669"/>
    <property type="project" value="UniProtKB-UniRule"/>
</dbReference>
<dbReference type="CDD" id="cd03892">
    <property type="entry name" value="M20_peptT"/>
    <property type="match status" value="1"/>
</dbReference>
<dbReference type="FunFam" id="3.30.70.360:FF:000002">
    <property type="entry name" value="Peptidase T"/>
    <property type="match status" value="1"/>
</dbReference>
<dbReference type="Gene3D" id="3.30.70.360">
    <property type="match status" value="1"/>
</dbReference>
<dbReference type="Gene3D" id="3.40.630.10">
    <property type="entry name" value="Zn peptidases"/>
    <property type="match status" value="1"/>
</dbReference>
<dbReference type="HAMAP" id="MF_00550">
    <property type="entry name" value="Aminopeptidase_M20"/>
    <property type="match status" value="1"/>
</dbReference>
<dbReference type="InterPro" id="IPR001261">
    <property type="entry name" value="ArgE/DapE_CS"/>
</dbReference>
<dbReference type="InterPro" id="IPR036264">
    <property type="entry name" value="Bact_exopeptidase_dim_dom"/>
</dbReference>
<dbReference type="InterPro" id="IPR002933">
    <property type="entry name" value="Peptidase_M20"/>
</dbReference>
<dbReference type="InterPro" id="IPR011650">
    <property type="entry name" value="Peptidase_M20_dimer"/>
</dbReference>
<dbReference type="InterPro" id="IPR010161">
    <property type="entry name" value="Peptidase_M20B"/>
</dbReference>
<dbReference type="NCBIfam" id="TIGR01882">
    <property type="entry name" value="peptidase-T"/>
    <property type="match status" value="1"/>
</dbReference>
<dbReference type="NCBIfam" id="NF003976">
    <property type="entry name" value="PRK05469.1"/>
    <property type="match status" value="1"/>
</dbReference>
<dbReference type="NCBIfam" id="NF009920">
    <property type="entry name" value="PRK13381.1"/>
    <property type="match status" value="1"/>
</dbReference>
<dbReference type="PANTHER" id="PTHR42994">
    <property type="entry name" value="PEPTIDASE T"/>
    <property type="match status" value="1"/>
</dbReference>
<dbReference type="PANTHER" id="PTHR42994:SF1">
    <property type="entry name" value="PEPTIDASE T"/>
    <property type="match status" value="1"/>
</dbReference>
<dbReference type="Pfam" id="PF07687">
    <property type="entry name" value="M20_dimer"/>
    <property type="match status" value="1"/>
</dbReference>
<dbReference type="Pfam" id="PF01546">
    <property type="entry name" value="Peptidase_M20"/>
    <property type="match status" value="1"/>
</dbReference>
<dbReference type="PIRSF" id="PIRSF037215">
    <property type="entry name" value="Peptidase_M20B"/>
    <property type="match status" value="1"/>
</dbReference>
<dbReference type="SUPFAM" id="SSF55031">
    <property type="entry name" value="Bacterial exopeptidase dimerisation domain"/>
    <property type="match status" value="1"/>
</dbReference>
<dbReference type="SUPFAM" id="SSF53187">
    <property type="entry name" value="Zn-dependent exopeptidases"/>
    <property type="match status" value="1"/>
</dbReference>
<dbReference type="PROSITE" id="PS00758">
    <property type="entry name" value="ARGE_DAPE_CPG2_1"/>
    <property type="match status" value="1"/>
</dbReference>
<dbReference type="PROSITE" id="PS00759">
    <property type="entry name" value="ARGE_DAPE_CPG2_2"/>
    <property type="match status" value="1"/>
</dbReference>
<accession>Q6HF68</accession>
<name>PEPT_BACHK</name>